<organism>
    <name type="scientific">Burkholderia thailandensis (strain ATCC 700388 / DSM 13276 / CCUG 48851 / CIP 106301 / E264)</name>
    <dbReference type="NCBI Taxonomy" id="271848"/>
    <lineage>
        <taxon>Bacteria</taxon>
        <taxon>Pseudomonadati</taxon>
        <taxon>Pseudomonadota</taxon>
        <taxon>Betaproteobacteria</taxon>
        <taxon>Burkholderiales</taxon>
        <taxon>Burkholderiaceae</taxon>
        <taxon>Burkholderia</taxon>
        <taxon>pseudomallei group</taxon>
    </lineage>
</organism>
<sequence>MTIIRVKENEPFEVAMRRFKRTIEKNGLLTELRAREFYEKPTAERKRKKAAAVKRHYKRIRGQMLPKKLY</sequence>
<feature type="chain" id="PRO_0000266645" description="Small ribosomal subunit protein bS21B">
    <location>
        <begin position="1"/>
        <end position="70"/>
    </location>
</feature>
<protein>
    <recommendedName>
        <fullName evidence="1">Small ribosomal subunit protein bS21B</fullName>
    </recommendedName>
    <alternativeName>
        <fullName evidence="2">30S ribosomal protein S21 2</fullName>
    </alternativeName>
</protein>
<proteinExistence type="inferred from homology"/>
<reference key="1">
    <citation type="journal article" date="2005" name="BMC Genomics">
        <title>Bacterial genome adaptation to niches: divergence of the potential virulence genes in three Burkholderia species of different survival strategies.</title>
        <authorList>
            <person name="Kim H.S."/>
            <person name="Schell M.A."/>
            <person name="Yu Y."/>
            <person name="Ulrich R.L."/>
            <person name="Sarria S.H."/>
            <person name="Nierman W.C."/>
            <person name="DeShazer D."/>
        </authorList>
    </citation>
    <scope>NUCLEOTIDE SEQUENCE [LARGE SCALE GENOMIC DNA]</scope>
    <source>
        <strain>ATCC 700388 / DSM 13276 / CCUG 48851 / CIP 106301 / E264</strain>
    </source>
</reference>
<comment type="similarity">
    <text evidence="1">Belongs to the bacterial ribosomal protein bS21 family.</text>
</comment>
<dbReference type="EMBL" id="CP000085">
    <property type="protein sequence ID" value="ABC34785.1"/>
    <property type="molecule type" value="Genomic_DNA"/>
</dbReference>
<dbReference type="SMR" id="Q2T7N1"/>
<dbReference type="GeneID" id="45118109"/>
<dbReference type="KEGG" id="bte:BTH_II0618"/>
<dbReference type="HOGENOM" id="CLU_159258_1_2_4"/>
<dbReference type="Proteomes" id="UP000001930">
    <property type="component" value="Chromosome II"/>
</dbReference>
<dbReference type="GO" id="GO:1990904">
    <property type="term" value="C:ribonucleoprotein complex"/>
    <property type="evidence" value="ECO:0007669"/>
    <property type="project" value="UniProtKB-KW"/>
</dbReference>
<dbReference type="GO" id="GO:0005840">
    <property type="term" value="C:ribosome"/>
    <property type="evidence" value="ECO:0007669"/>
    <property type="project" value="UniProtKB-KW"/>
</dbReference>
<dbReference type="GO" id="GO:0003735">
    <property type="term" value="F:structural constituent of ribosome"/>
    <property type="evidence" value="ECO:0007669"/>
    <property type="project" value="InterPro"/>
</dbReference>
<dbReference type="GO" id="GO:0006412">
    <property type="term" value="P:translation"/>
    <property type="evidence" value="ECO:0007669"/>
    <property type="project" value="UniProtKB-UniRule"/>
</dbReference>
<dbReference type="Gene3D" id="1.20.5.1150">
    <property type="entry name" value="Ribosomal protein S8"/>
    <property type="match status" value="1"/>
</dbReference>
<dbReference type="HAMAP" id="MF_00358">
    <property type="entry name" value="Ribosomal_bS21"/>
    <property type="match status" value="1"/>
</dbReference>
<dbReference type="InterPro" id="IPR001911">
    <property type="entry name" value="Ribosomal_bS21"/>
</dbReference>
<dbReference type="InterPro" id="IPR038380">
    <property type="entry name" value="Ribosomal_bS21_sf"/>
</dbReference>
<dbReference type="NCBIfam" id="TIGR00030">
    <property type="entry name" value="S21p"/>
    <property type="match status" value="1"/>
</dbReference>
<dbReference type="PANTHER" id="PTHR21109">
    <property type="entry name" value="MITOCHONDRIAL 28S RIBOSOMAL PROTEIN S21"/>
    <property type="match status" value="1"/>
</dbReference>
<dbReference type="PANTHER" id="PTHR21109:SF22">
    <property type="entry name" value="SMALL RIBOSOMAL SUBUNIT PROTEIN BS21"/>
    <property type="match status" value="1"/>
</dbReference>
<dbReference type="Pfam" id="PF01165">
    <property type="entry name" value="Ribosomal_S21"/>
    <property type="match status" value="1"/>
</dbReference>
<dbReference type="PRINTS" id="PR00976">
    <property type="entry name" value="RIBOSOMALS21"/>
</dbReference>
<keyword id="KW-0687">Ribonucleoprotein</keyword>
<keyword id="KW-0689">Ribosomal protein</keyword>
<name>RS212_BURTA</name>
<accession>Q2T7N1</accession>
<evidence type="ECO:0000255" key="1">
    <source>
        <dbReference type="HAMAP-Rule" id="MF_00358"/>
    </source>
</evidence>
<evidence type="ECO:0000305" key="2"/>
<gene>
    <name evidence="1" type="primary">rpsU2</name>
    <name type="ordered locus">BTH_II0618</name>
</gene>